<proteinExistence type="inferred from homology"/>
<comment type="function">
    <text evidence="3">Odorant receptor.</text>
</comment>
<comment type="subcellular location">
    <subcellularLocation>
        <location evidence="3">Cell membrane</location>
        <topology evidence="1">Multi-pass membrane protein</topology>
    </subcellularLocation>
</comment>
<comment type="similarity">
    <text evidence="2">Belongs to the G-protein coupled receptor 1 family.</text>
</comment>
<comment type="sequence caution" evidence="3">
    <conflict type="erroneous gene model prediction">
        <sequence resource="EMBL-CDS" id="BAC05707"/>
    </conflict>
</comment>
<comment type="online information" name="Human Olfactory Receptor Data Exploratorium (HORDE)">
    <link uri="http://genome.weizmann.ac.il/horde/card/index/symbol:OR14L1P"/>
</comment>
<organism>
    <name type="scientific">Homo sapiens</name>
    <name type="common">Human</name>
    <dbReference type="NCBI Taxonomy" id="9606"/>
    <lineage>
        <taxon>Eukaryota</taxon>
        <taxon>Metazoa</taxon>
        <taxon>Chordata</taxon>
        <taxon>Craniata</taxon>
        <taxon>Vertebrata</taxon>
        <taxon>Euteleostomi</taxon>
        <taxon>Mammalia</taxon>
        <taxon>Eutheria</taxon>
        <taxon>Euarchontoglires</taxon>
        <taxon>Primates</taxon>
        <taxon>Haplorrhini</taxon>
        <taxon>Catarrhini</taxon>
        <taxon>Hominidae</taxon>
        <taxon>Homo</taxon>
    </lineage>
</organism>
<dbReference type="EMBL" id="AB065440">
    <property type="protein sequence ID" value="BAC05707.1"/>
    <property type="status" value="ALT_SEQ"/>
    <property type="molecule type" value="Genomic_DNA"/>
</dbReference>
<dbReference type="EMBL" id="AL606804">
    <property type="status" value="NOT_ANNOTATED_CDS"/>
    <property type="molecule type" value="Genomic_DNA"/>
</dbReference>
<dbReference type="CCDS" id="CCDS91192.1"/>
<dbReference type="RefSeq" id="NP_001383035.1">
    <property type="nucleotide sequence ID" value="NM_001396106.1"/>
</dbReference>
<dbReference type="SMR" id="Q8NHC6"/>
<dbReference type="iPTMnet" id="Q8NHC6"/>
<dbReference type="PhosphoSitePlus" id="Q8NHC6"/>
<dbReference type="BioMuta" id="HGNC:15023"/>
<dbReference type="DMDM" id="38372838"/>
<dbReference type="jPOST" id="Q8NHC6"/>
<dbReference type="Ensembl" id="ENST00000641545.1">
    <property type="protein sequence ID" value="ENSP00000502618.1"/>
    <property type="gene ID" value="ENSG00000198452.8"/>
</dbReference>
<dbReference type="GeneID" id="127617"/>
<dbReference type="MANE-Select" id="ENST00000641545.1">
    <property type="protein sequence ID" value="ENSP00000502618.1"/>
    <property type="RefSeq nucleotide sequence ID" value="NM_001396106.1"/>
    <property type="RefSeq protein sequence ID" value="NP_001383035.1"/>
</dbReference>
<dbReference type="AGR" id="HGNC:15023"/>
<dbReference type="GeneCards" id="OR14L1"/>
<dbReference type="HGNC" id="HGNC:15023">
    <property type="gene designation" value="OR14L1"/>
</dbReference>
<dbReference type="neXtProt" id="NX_Q8NHC6"/>
<dbReference type="PharmGKB" id="PA32475"/>
<dbReference type="GeneTree" id="ENSGT01050000244828"/>
<dbReference type="InParanoid" id="Q8NHC6"/>
<dbReference type="OMA" id="YMYIFSV"/>
<dbReference type="PAN-GO" id="Q8NHC6">
    <property type="GO annotations" value="2 GO annotations based on evolutionary models"/>
</dbReference>
<dbReference type="PhylomeDB" id="Q8NHC6"/>
<dbReference type="PathwayCommons" id="Q8NHC6"/>
<dbReference type="Pharos" id="Q8NHC6">
    <property type="development level" value="Tdark"/>
</dbReference>
<dbReference type="PRO" id="PR:Q8NHC6"/>
<dbReference type="Proteomes" id="UP000005640">
    <property type="component" value="Chromosome 1"/>
</dbReference>
<dbReference type="RNAct" id="Q8NHC6">
    <property type="molecule type" value="protein"/>
</dbReference>
<dbReference type="Bgee" id="ENSG00000198452">
    <property type="expression patterns" value="Expressed in rectum and 3 other cell types or tissues"/>
</dbReference>
<dbReference type="GO" id="GO:0005886">
    <property type="term" value="C:plasma membrane"/>
    <property type="evidence" value="ECO:0007669"/>
    <property type="project" value="UniProtKB-SubCell"/>
</dbReference>
<dbReference type="GO" id="GO:0004930">
    <property type="term" value="F:G protein-coupled receptor activity"/>
    <property type="evidence" value="ECO:0007669"/>
    <property type="project" value="UniProtKB-KW"/>
</dbReference>
<dbReference type="GO" id="GO:0005549">
    <property type="term" value="F:odorant binding"/>
    <property type="evidence" value="ECO:0000318"/>
    <property type="project" value="GO_Central"/>
</dbReference>
<dbReference type="GO" id="GO:0004984">
    <property type="term" value="F:olfactory receptor activity"/>
    <property type="evidence" value="ECO:0000318"/>
    <property type="project" value="GO_Central"/>
</dbReference>
<dbReference type="CDD" id="cd15227">
    <property type="entry name" value="7tmA_OR14-like"/>
    <property type="match status" value="1"/>
</dbReference>
<dbReference type="FunFam" id="1.20.1070.10:FF:000037">
    <property type="entry name" value="Olfactory receptor"/>
    <property type="match status" value="1"/>
</dbReference>
<dbReference type="Gene3D" id="1.20.1070.10">
    <property type="entry name" value="Rhodopsin 7-helix transmembrane proteins"/>
    <property type="match status" value="1"/>
</dbReference>
<dbReference type="InterPro" id="IPR000276">
    <property type="entry name" value="GPCR_Rhodpsn"/>
</dbReference>
<dbReference type="InterPro" id="IPR017452">
    <property type="entry name" value="GPCR_Rhodpsn_7TM"/>
</dbReference>
<dbReference type="InterPro" id="IPR000725">
    <property type="entry name" value="Olfact_rcpt"/>
</dbReference>
<dbReference type="InterPro" id="IPR050516">
    <property type="entry name" value="Olfactory_GPCR"/>
</dbReference>
<dbReference type="PANTHER" id="PTHR26452">
    <property type="entry name" value="OLFACTORY RECEPTOR"/>
    <property type="match status" value="1"/>
</dbReference>
<dbReference type="Pfam" id="PF13853">
    <property type="entry name" value="7tm_4"/>
    <property type="match status" value="1"/>
</dbReference>
<dbReference type="PRINTS" id="PR00237">
    <property type="entry name" value="GPCRRHODOPSN"/>
</dbReference>
<dbReference type="PRINTS" id="PR00245">
    <property type="entry name" value="OLFACTORYR"/>
</dbReference>
<dbReference type="SUPFAM" id="SSF81321">
    <property type="entry name" value="Family A G protein-coupled receptor-like"/>
    <property type="match status" value="1"/>
</dbReference>
<dbReference type="PROSITE" id="PS00237">
    <property type="entry name" value="G_PROTEIN_RECEP_F1_1"/>
    <property type="match status" value="1"/>
</dbReference>
<dbReference type="PROSITE" id="PS50262">
    <property type="entry name" value="G_PROTEIN_RECEP_F1_2"/>
    <property type="match status" value="1"/>
</dbReference>
<keyword id="KW-1003">Cell membrane</keyword>
<keyword id="KW-0297">G-protein coupled receptor</keyword>
<keyword id="KW-0472">Membrane</keyword>
<keyword id="KW-0552">Olfaction</keyword>
<keyword id="KW-0675">Receptor</keyword>
<keyword id="KW-1185">Reference proteome</keyword>
<keyword id="KW-0716">Sensory transduction</keyword>
<keyword id="KW-0807">Transducer</keyword>
<keyword id="KW-0812">Transmembrane</keyword>
<keyword id="KW-1133">Transmembrane helix</keyword>
<evidence type="ECO:0000255" key="1"/>
<evidence type="ECO:0000255" key="2">
    <source>
        <dbReference type="PROSITE-ProRule" id="PRU00521"/>
    </source>
</evidence>
<evidence type="ECO:0000305" key="3"/>
<evidence type="ECO:0000312" key="4">
    <source>
        <dbReference type="HGNC" id="HGNC:15023"/>
    </source>
</evidence>
<reference key="1">
    <citation type="submission" date="2001-07" db="EMBL/GenBank/DDBJ databases">
        <title>Genome-wide discovery and analysis of human seven transmembrane helix receptor genes.</title>
        <authorList>
            <person name="Suwa M."/>
            <person name="Sato T."/>
            <person name="Okouchi I."/>
            <person name="Arita M."/>
            <person name="Futami K."/>
            <person name="Matsumoto S."/>
            <person name="Tsutsumi S."/>
            <person name="Aburatani H."/>
            <person name="Asai K."/>
            <person name="Akiyama Y."/>
        </authorList>
    </citation>
    <scope>NUCLEOTIDE SEQUENCE [GENOMIC DNA]</scope>
</reference>
<reference key="2">
    <citation type="journal article" date="2006" name="Nature">
        <title>The DNA sequence and biological annotation of human chromosome 1.</title>
        <authorList>
            <person name="Gregory S.G."/>
            <person name="Barlow K.F."/>
            <person name="McLay K.E."/>
            <person name="Kaul R."/>
            <person name="Swarbreck D."/>
            <person name="Dunham A."/>
            <person name="Scott C.E."/>
            <person name="Howe K.L."/>
            <person name="Woodfine K."/>
            <person name="Spencer C.C.A."/>
            <person name="Jones M.C."/>
            <person name="Gillson C."/>
            <person name="Searle S."/>
            <person name="Zhou Y."/>
            <person name="Kokocinski F."/>
            <person name="McDonald L."/>
            <person name="Evans R."/>
            <person name="Phillips K."/>
            <person name="Atkinson A."/>
            <person name="Cooper R."/>
            <person name="Jones C."/>
            <person name="Hall R.E."/>
            <person name="Andrews T.D."/>
            <person name="Lloyd C."/>
            <person name="Ainscough R."/>
            <person name="Almeida J.P."/>
            <person name="Ambrose K.D."/>
            <person name="Anderson F."/>
            <person name="Andrew R.W."/>
            <person name="Ashwell R.I.S."/>
            <person name="Aubin K."/>
            <person name="Babbage A.K."/>
            <person name="Bagguley C.L."/>
            <person name="Bailey J."/>
            <person name="Beasley H."/>
            <person name="Bethel G."/>
            <person name="Bird C.P."/>
            <person name="Bray-Allen S."/>
            <person name="Brown J.Y."/>
            <person name="Brown A.J."/>
            <person name="Buckley D."/>
            <person name="Burton J."/>
            <person name="Bye J."/>
            <person name="Carder C."/>
            <person name="Chapman J.C."/>
            <person name="Clark S.Y."/>
            <person name="Clarke G."/>
            <person name="Clee C."/>
            <person name="Cobley V."/>
            <person name="Collier R.E."/>
            <person name="Corby N."/>
            <person name="Coville G.J."/>
            <person name="Davies J."/>
            <person name="Deadman R."/>
            <person name="Dunn M."/>
            <person name="Earthrowl M."/>
            <person name="Ellington A.G."/>
            <person name="Errington H."/>
            <person name="Frankish A."/>
            <person name="Frankland J."/>
            <person name="French L."/>
            <person name="Garner P."/>
            <person name="Garnett J."/>
            <person name="Gay L."/>
            <person name="Ghori M.R.J."/>
            <person name="Gibson R."/>
            <person name="Gilby L.M."/>
            <person name="Gillett W."/>
            <person name="Glithero R.J."/>
            <person name="Grafham D.V."/>
            <person name="Griffiths C."/>
            <person name="Griffiths-Jones S."/>
            <person name="Grocock R."/>
            <person name="Hammond S."/>
            <person name="Harrison E.S.I."/>
            <person name="Hart E."/>
            <person name="Haugen E."/>
            <person name="Heath P.D."/>
            <person name="Holmes S."/>
            <person name="Holt K."/>
            <person name="Howden P.J."/>
            <person name="Hunt A.R."/>
            <person name="Hunt S.E."/>
            <person name="Hunter G."/>
            <person name="Isherwood J."/>
            <person name="James R."/>
            <person name="Johnson C."/>
            <person name="Johnson D."/>
            <person name="Joy A."/>
            <person name="Kay M."/>
            <person name="Kershaw J.K."/>
            <person name="Kibukawa M."/>
            <person name="Kimberley A.M."/>
            <person name="King A."/>
            <person name="Knights A.J."/>
            <person name="Lad H."/>
            <person name="Laird G."/>
            <person name="Lawlor S."/>
            <person name="Leongamornlert D.A."/>
            <person name="Lloyd D.M."/>
            <person name="Loveland J."/>
            <person name="Lovell J."/>
            <person name="Lush M.J."/>
            <person name="Lyne R."/>
            <person name="Martin S."/>
            <person name="Mashreghi-Mohammadi M."/>
            <person name="Matthews L."/>
            <person name="Matthews N.S.W."/>
            <person name="McLaren S."/>
            <person name="Milne S."/>
            <person name="Mistry S."/>
            <person name="Moore M.J.F."/>
            <person name="Nickerson T."/>
            <person name="O'Dell C.N."/>
            <person name="Oliver K."/>
            <person name="Palmeiri A."/>
            <person name="Palmer S.A."/>
            <person name="Parker A."/>
            <person name="Patel D."/>
            <person name="Pearce A.V."/>
            <person name="Peck A.I."/>
            <person name="Pelan S."/>
            <person name="Phelps K."/>
            <person name="Phillimore B.J."/>
            <person name="Plumb R."/>
            <person name="Rajan J."/>
            <person name="Raymond C."/>
            <person name="Rouse G."/>
            <person name="Saenphimmachak C."/>
            <person name="Sehra H.K."/>
            <person name="Sheridan E."/>
            <person name="Shownkeen R."/>
            <person name="Sims S."/>
            <person name="Skuce C.D."/>
            <person name="Smith M."/>
            <person name="Steward C."/>
            <person name="Subramanian S."/>
            <person name="Sycamore N."/>
            <person name="Tracey A."/>
            <person name="Tromans A."/>
            <person name="Van Helmond Z."/>
            <person name="Wall M."/>
            <person name="Wallis J.M."/>
            <person name="White S."/>
            <person name="Whitehead S.L."/>
            <person name="Wilkinson J.E."/>
            <person name="Willey D.L."/>
            <person name="Williams H."/>
            <person name="Wilming L."/>
            <person name="Wray P.W."/>
            <person name="Wu Z."/>
            <person name="Coulson A."/>
            <person name="Vaudin M."/>
            <person name="Sulston J.E."/>
            <person name="Durbin R.M."/>
            <person name="Hubbard T."/>
            <person name="Wooster R."/>
            <person name="Dunham I."/>
            <person name="Carter N.P."/>
            <person name="McVean G."/>
            <person name="Ross M.T."/>
            <person name="Harrow J."/>
            <person name="Olson M.V."/>
            <person name="Beck S."/>
            <person name="Rogers J."/>
            <person name="Bentley D.R."/>
        </authorList>
    </citation>
    <scope>NUCLEOTIDE SEQUENCE [LARGE SCALE GENOMIC DNA]</scope>
</reference>
<protein>
    <recommendedName>
        <fullName>Olfactory receptor 14L1</fullName>
    </recommendedName>
    <alternativeName>
        <fullName>Olfactory receptor 5AV1</fullName>
    </alternativeName>
</protein>
<name>O14L1_HUMAN</name>
<gene>
    <name evidence="4" type="primary">OR14L1</name>
    <name type="synonym">OR14L1P</name>
    <name type="synonym">OR5AV1P</name>
</gene>
<sequence>MAQFNKNQLIACRRNGTTTSDFNQTEVAEFFLMGFSNSWDIQIVHAALFFLVYLAAVIGNLLIIILTTLDVHLQTPMYFFLRNLSFLDFCYISVTIPKSIVSSLTHDTSISFFGCALQAFFFMDLATTEVAILTVMSYDRYMAICRPLHYEVIINQGVCLRMMAMSWLSGVICGFMHVIATFSLPFCGRNRIRQFFCNIPQLLSLLDPKVITIEIGVMVFGTSLVIISFVVITLSYMYIFSVIMRIPSKEGRSKTFSTCIPHLVVVTLFMISGSIAYVKPISNSPPVLDVFLSAFYTVVPPTLNPVIYSLRNRDMKAALRRQCGP</sequence>
<accession>Q8NHC6</accession>
<accession>A0A6Q8PHD8</accession>
<accession>Q5JQT0</accession>
<feature type="chain" id="PRO_0000150583" description="Olfactory receptor 14L1">
    <location>
        <begin position="1"/>
        <end position="325"/>
    </location>
</feature>
<feature type="topological domain" description="Extracellular" evidence="1">
    <location>
        <begin position="1"/>
        <end position="43"/>
    </location>
</feature>
<feature type="transmembrane region" description="Helical; Name=1" evidence="1">
    <location>
        <begin position="44"/>
        <end position="64"/>
    </location>
</feature>
<feature type="topological domain" description="Cytoplasmic" evidence="1">
    <location>
        <begin position="65"/>
        <end position="72"/>
    </location>
</feature>
<feature type="transmembrane region" description="Helical; Name=2" evidence="1">
    <location>
        <begin position="73"/>
        <end position="93"/>
    </location>
</feature>
<feature type="topological domain" description="Extracellular" evidence="1">
    <location>
        <begin position="94"/>
        <end position="117"/>
    </location>
</feature>
<feature type="transmembrane region" description="Helical; Name=3" evidence="1">
    <location>
        <begin position="118"/>
        <end position="138"/>
    </location>
</feature>
<feature type="topological domain" description="Cytoplasmic" evidence="1">
    <location>
        <begin position="139"/>
        <end position="151"/>
    </location>
</feature>
<feature type="transmembrane region" description="Helical; Name=4" evidence="1">
    <location>
        <begin position="152"/>
        <end position="172"/>
    </location>
</feature>
<feature type="topological domain" description="Extracellular" evidence="1">
    <location>
        <begin position="173"/>
        <end position="214"/>
    </location>
</feature>
<feature type="transmembrane region" description="Helical; Name=5" evidence="1">
    <location>
        <begin position="215"/>
        <end position="235"/>
    </location>
</feature>
<feature type="topological domain" description="Cytoplasmic" evidence="1">
    <location>
        <begin position="236"/>
        <end position="255"/>
    </location>
</feature>
<feature type="transmembrane region" description="Helical; Name=6" evidence="1">
    <location>
        <begin position="256"/>
        <end position="276"/>
    </location>
</feature>
<feature type="topological domain" description="Extracellular" evidence="1">
    <location>
        <begin position="277"/>
        <end position="289"/>
    </location>
</feature>
<feature type="transmembrane region" description="Helical; Name=7" evidence="1">
    <location>
        <begin position="290"/>
        <end position="310"/>
    </location>
</feature>
<feature type="topological domain" description="Cytoplasmic" evidence="1">
    <location>
        <begin position="311"/>
        <end position="325"/>
    </location>
</feature>